<evidence type="ECO:0000255" key="1">
    <source>
        <dbReference type="HAMAP-Rule" id="MF_01293"/>
    </source>
</evidence>
<organism>
    <name type="scientific">Escherichia coli O127:H6 (strain E2348/69 / EPEC)</name>
    <dbReference type="NCBI Taxonomy" id="574521"/>
    <lineage>
        <taxon>Bacteria</taxon>
        <taxon>Pseudomonadati</taxon>
        <taxon>Pseudomonadota</taxon>
        <taxon>Gammaproteobacteria</taxon>
        <taxon>Enterobacterales</taxon>
        <taxon>Enterobacteriaceae</taxon>
        <taxon>Escherichia</taxon>
    </lineage>
</organism>
<proteinExistence type="inferred from homology"/>
<keyword id="KW-0456">Lyase</keyword>
<keyword id="KW-0479">Metal-binding</keyword>
<keyword id="KW-1185">Reference proteome</keyword>
<keyword id="KW-0862">Zinc</keyword>
<feature type="chain" id="PRO_1000165275" description="D-tagatose-1,6-bisphosphate aldolase subunit KbaY">
    <location>
        <begin position="1"/>
        <end position="286"/>
    </location>
</feature>
<feature type="active site" description="Proton donor" evidence="1">
    <location>
        <position position="82"/>
    </location>
</feature>
<feature type="binding site" evidence="1">
    <location>
        <position position="83"/>
    </location>
    <ligand>
        <name>Zn(2+)</name>
        <dbReference type="ChEBI" id="CHEBI:29105"/>
        <note>catalytic</note>
    </ligand>
</feature>
<feature type="binding site" evidence="1">
    <location>
        <position position="180"/>
    </location>
    <ligand>
        <name>Zn(2+)</name>
        <dbReference type="ChEBI" id="CHEBI:29105"/>
        <note>catalytic</note>
    </ligand>
</feature>
<feature type="binding site" evidence="1">
    <location>
        <position position="181"/>
    </location>
    <ligand>
        <name>dihydroxyacetone phosphate</name>
        <dbReference type="ChEBI" id="CHEBI:57642"/>
    </ligand>
</feature>
<feature type="binding site" evidence="1">
    <location>
        <position position="208"/>
    </location>
    <ligand>
        <name>Zn(2+)</name>
        <dbReference type="ChEBI" id="CHEBI:29105"/>
        <note>catalytic</note>
    </ligand>
</feature>
<feature type="binding site" evidence="1">
    <location>
        <begin position="209"/>
        <end position="211"/>
    </location>
    <ligand>
        <name>dihydroxyacetone phosphate</name>
        <dbReference type="ChEBI" id="CHEBI:57642"/>
    </ligand>
</feature>
<feature type="binding site" evidence="1">
    <location>
        <begin position="230"/>
        <end position="233"/>
    </location>
    <ligand>
        <name>dihydroxyacetone phosphate</name>
        <dbReference type="ChEBI" id="CHEBI:57642"/>
    </ligand>
</feature>
<name>KBAY_ECO27</name>
<sequence length="286" mass="31367">MSIISTKYLLQDAQANGYAVPAFNIHNAETIQAILEVCSEMRSPVILAGTPGTFKHIALEEIYALCSAYSMTYNMPLALHLDHHESRDDIRRKVHAGVRSAMIDGSHFPFAENVKLVKSVVDFCHSQDCSVEAELGRLGGVEDDMSVDAESAFLTDPQEAKRFVELTGVDSLAVAIGTAHGLYSKTPKIDFQRLAEIREVVDVPLVLHGASDVPDEFVRRTIELGVTKVNVATELKIAFAGAVKAWFAENPQGNDPRYYMRVGMDAMKEVVRNKINVCGSANRISA</sequence>
<gene>
    <name evidence="1" type="primary">kbaY</name>
    <name type="ordered locus">E2348C_3423</name>
</gene>
<comment type="function">
    <text evidence="1">Catalytic subunit of the tagatose-1,6-bisphosphate aldolase KbaYZ, which catalyzes the reversible aldol condensation of dihydroxyacetone phosphate (DHAP or glycerone-phosphate) with glyceraldehyde 3-phosphate (G3P) to produce tagatose 1,6-bisphosphate (TBP). Requires KbaZ subunit for full activity and stability.</text>
</comment>
<comment type="catalytic activity">
    <reaction evidence="1">
        <text>D-tagatofuranose 1,6-bisphosphate = D-glyceraldehyde 3-phosphate + dihydroxyacetone phosphate</text>
        <dbReference type="Rhea" id="RHEA:22948"/>
        <dbReference type="ChEBI" id="CHEBI:57642"/>
        <dbReference type="ChEBI" id="CHEBI:58694"/>
        <dbReference type="ChEBI" id="CHEBI:59776"/>
        <dbReference type="EC" id="4.1.2.40"/>
    </reaction>
</comment>
<comment type="cofactor">
    <cofactor evidence="1">
        <name>Zn(2+)</name>
        <dbReference type="ChEBI" id="CHEBI:29105"/>
    </cofactor>
    <text evidence="1">Binds 1 zinc ion per subunit.</text>
</comment>
<comment type="pathway">
    <text evidence="1">Carbohydrate metabolism; D-tagatose 6-phosphate degradation; D-glyceraldehyde 3-phosphate and glycerone phosphate from D-tagatose 6-phosphate: step 2/2.</text>
</comment>
<comment type="subunit">
    <text evidence="1">Homotetramer. Forms a complex with KbaZ.</text>
</comment>
<comment type="similarity">
    <text evidence="1">Belongs to the class II fructose-bisphosphate aldolase family. TagBP aldolase KbaY subfamily.</text>
</comment>
<accession>B7UJ37</accession>
<reference key="1">
    <citation type="journal article" date="2009" name="J. Bacteriol.">
        <title>Complete genome sequence and comparative genome analysis of enteropathogenic Escherichia coli O127:H6 strain E2348/69.</title>
        <authorList>
            <person name="Iguchi A."/>
            <person name="Thomson N.R."/>
            <person name="Ogura Y."/>
            <person name="Saunders D."/>
            <person name="Ooka T."/>
            <person name="Henderson I.R."/>
            <person name="Harris D."/>
            <person name="Asadulghani M."/>
            <person name="Kurokawa K."/>
            <person name="Dean P."/>
            <person name="Kenny B."/>
            <person name="Quail M.A."/>
            <person name="Thurston S."/>
            <person name="Dougan G."/>
            <person name="Hayashi T."/>
            <person name="Parkhill J."/>
            <person name="Frankel G."/>
        </authorList>
    </citation>
    <scope>NUCLEOTIDE SEQUENCE [LARGE SCALE GENOMIC DNA]</scope>
    <source>
        <strain>E2348/69 / EPEC</strain>
    </source>
</reference>
<protein>
    <recommendedName>
        <fullName evidence="1">D-tagatose-1,6-bisphosphate aldolase subunit KbaY</fullName>
        <shortName evidence="1">TBPA</shortName>
        <shortName evidence="1">TagBP aldolase</shortName>
        <ecNumber evidence="1">4.1.2.40</ecNumber>
    </recommendedName>
    <alternativeName>
        <fullName evidence="1">D-tagatose-bisphosphate aldolase class II</fullName>
    </alternativeName>
    <alternativeName>
        <fullName evidence="1">Ketose 1,6-bisphosphate aldolase class II</fullName>
    </alternativeName>
    <alternativeName>
        <fullName evidence="1">Tagatose-bisphosphate aldolase</fullName>
    </alternativeName>
</protein>
<dbReference type="EC" id="4.1.2.40" evidence="1"/>
<dbReference type="EMBL" id="FM180568">
    <property type="protein sequence ID" value="CAS10971.1"/>
    <property type="molecule type" value="Genomic_DNA"/>
</dbReference>
<dbReference type="RefSeq" id="WP_000022759.1">
    <property type="nucleotide sequence ID" value="NC_011601.1"/>
</dbReference>
<dbReference type="SMR" id="B7UJ37"/>
<dbReference type="KEGG" id="ecg:E2348C_3423"/>
<dbReference type="HOGENOM" id="CLU_040088_0_1_6"/>
<dbReference type="UniPathway" id="UPA00704">
    <property type="reaction ID" value="UER00716"/>
</dbReference>
<dbReference type="Proteomes" id="UP000008205">
    <property type="component" value="Chromosome"/>
</dbReference>
<dbReference type="GO" id="GO:0005829">
    <property type="term" value="C:cytosol"/>
    <property type="evidence" value="ECO:0007669"/>
    <property type="project" value="TreeGrafter"/>
</dbReference>
<dbReference type="GO" id="GO:0009025">
    <property type="term" value="F:tagatose-bisphosphate aldolase activity"/>
    <property type="evidence" value="ECO:0007669"/>
    <property type="project" value="UniProtKB-UniRule"/>
</dbReference>
<dbReference type="GO" id="GO:0008270">
    <property type="term" value="F:zinc ion binding"/>
    <property type="evidence" value="ECO:0007669"/>
    <property type="project" value="UniProtKB-UniRule"/>
</dbReference>
<dbReference type="GO" id="GO:0005975">
    <property type="term" value="P:carbohydrate metabolic process"/>
    <property type="evidence" value="ECO:0007669"/>
    <property type="project" value="InterPro"/>
</dbReference>
<dbReference type="GO" id="GO:2001059">
    <property type="term" value="P:D-tagatose 6-phosphate catabolic process"/>
    <property type="evidence" value="ECO:0007669"/>
    <property type="project" value="UniProtKB-UniRule"/>
</dbReference>
<dbReference type="FunFam" id="3.20.20.70:FF:000043">
    <property type="entry name" value="D-tagatose-1,6-bisphosphate aldolase subunit GatY"/>
    <property type="match status" value="1"/>
</dbReference>
<dbReference type="Gene3D" id="3.20.20.70">
    <property type="entry name" value="Aldolase class I"/>
    <property type="match status" value="1"/>
</dbReference>
<dbReference type="HAMAP" id="MF_01293">
    <property type="entry name" value="TagBP_aldolase_KbaY"/>
    <property type="match status" value="1"/>
</dbReference>
<dbReference type="InterPro" id="IPR013785">
    <property type="entry name" value="Aldolase_TIM"/>
</dbReference>
<dbReference type="InterPro" id="IPR050246">
    <property type="entry name" value="Class_II_FBP_aldolase"/>
</dbReference>
<dbReference type="InterPro" id="IPR000771">
    <property type="entry name" value="FBA_II"/>
</dbReference>
<dbReference type="InterPro" id="IPR023788">
    <property type="entry name" value="TagBP_ald_KbaY"/>
</dbReference>
<dbReference type="InterPro" id="IPR011288">
    <property type="entry name" value="TagBP_ald_KbaY/GatY"/>
</dbReference>
<dbReference type="NCBIfam" id="TIGR00167">
    <property type="entry name" value="cbbA"/>
    <property type="match status" value="1"/>
</dbReference>
<dbReference type="NCBIfam" id="NF006626">
    <property type="entry name" value="PRK09195.1"/>
    <property type="match status" value="1"/>
</dbReference>
<dbReference type="NCBIfam" id="NF009374">
    <property type="entry name" value="PRK12737.1"/>
    <property type="match status" value="1"/>
</dbReference>
<dbReference type="NCBIfam" id="NF009375">
    <property type="entry name" value="PRK12738.1"/>
    <property type="match status" value="1"/>
</dbReference>
<dbReference type="NCBIfam" id="TIGR01858">
    <property type="entry name" value="tag_bisphos_ald"/>
    <property type="match status" value="1"/>
</dbReference>
<dbReference type="PANTHER" id="PTHR30304">
    <property type="entry name" value="D-TAGATOSE-1,6-BISPHOSPHATE ALDOLASE"/>
    <property type="match status" value="1"/>
</dbReference>
<dbReference type="PANTHER" id="PTHR30304:SF0">
    <property type="entry name" value="D-TAGATOSE-1,6-BISPHOSPHATE ALDOLASE SUBUNIT GATY-RELATED"/>
    <property type="match status" value="1"/>
</dbReference>
<dbReference type="Pfam" id="PF01116">
    <property type="entry name" value="F_bP_aldolase"/>
    <property type="match status" value="1"/>
</dbReference>
<dbReference type="PIRSF" id="PIRSF001359">
    <property type="entry name" value="F_bP_aldolase_II"/>
    <property type="match status" value="1"/>
</dbReference>
<dbReference type="SUPFAM" id="SSF51569">
    <property type="entry name" value="Aldolase"/>
    <property type="match status" value="1"/>
</dbReference>
<dbReference type="PROSITE" id="PS00602">
    <property type="entry name" value="ALDOLASE_CLASS_II_1"/>
    <property type="match status" value="1"/>
</dbReference>
<dbReference type="PROSITE" id="PS00806">
    <property type="entry name" value="ALDOLASE_CLASS_II_2"/>
    <property type="match status" value="1"/>
</dbReference>